<feature type="chain" id="PRO_1000048282" description="Cytidylate kinase">
    <location>
        <begin position="1"/>
        <end position="227"/>
    </location>
</feature>
<feature type="binding site" evidence="1">
    <location>
        <begin position="12"/>
        <end position="20"/>
    </location>
    <ligand>
        <name>ATP</name>
        <dbReference type="ChEBI" id="CHEBI:30616"/>
    </ligand>
</feature>
<organism>
    <name type="scientific">Shigella boydii serotype 4 (strain Sb227)</name>
    <dbReference type="NCBI Taxonomy" id="300268"/>
    <lineage>
        <taxon>Bacteria</taxon>
        <taxon>Pseudomonadati</taxon>
        <taxon>Pseudomonadota</taxon>
        <taxon>Gammaproteobacteria</taxon>
        <taxon>Enterobacterales</taxon>
        <taxon>Enterobacteriaceae</taxon>
        <taxon>Shigella</taxon>
    </lineage>
</organism>
<comment type="catalytic activity">
    <reaction evidence="1">
        <text>CMP + ATP = CDP + ADP</text>
        <dbReference type="Rhea" id="RHEA:11600"/>
        <dbReference type="ChEBI" id="CHEBI:30616"/>
        <dbReference type="ChEBI" id="CHEBI:58069"/>
        <dbReference type="ChEBI" id="CHEBI:60377"/>
        <dbReference type="ChEBI" id="CHEBI:456216"/>
        <dbReference type="EC" id="2.7.4.25"/>
    </reaction>
</comment>
<comment type="catalytic activity">
    <reaction evidence="1">
        <text>dCMP + ATP = dCDP + ADP</text>
        <dbReference type="Rhea" id="RHEA:25094"/>
        <dbReference type="ChEBI" id="CHEBI:30616"/>
        <dbReference type="ChEBI" id="CHEBI:57566"/>
        <dbReference type="ChEBI" id="CHEBI:58593"/>
        <dbReference type="ChEBI" id="CHEBI:456216"/>
        <dbReference type="EC" id="2.7.4.25"/>
    </reaction>
</comment>
<comment type="subcellular location">
    <subcellularLocation>
        <location evidence="1">Cytoplasm</location>
    </subcellularLocation>
</comment>
<comment type="similarity">
    <text evidence="1">Belongs to the cytidylate kinase family. Type 1 subfamily.</text>
</comment>
<sequence>MTAIAPVITIDGPSGAGKGTLCKAMAEALQWHLLDSGAIYRVLALAALHHHVDVASEDALVPLASHLDVRFVSTNGNLEVILEGEDVSGEIRTQEVANAASQVATFPRVREALLRRQRAFRELPGLIADGRDMGTVVFPDAPVKIFLDASSEERAHRRMLQLQEKGFSVNFERLLAEIKERDDRDRNRAVAPLVPAADALVLDSTTLSIEQVIEKALQYARQKLALA</sequence>
<dbReference type="EC" id="2.7.4.25" evidence="1"/>
<dbReference type="EMBL" id="CP000036">
    <property type="protein sequence ID" value="ABB66768.1"/>
    <property type="molecule type" value="Genomic_DNA"/>
</dbReference>
<dbReference type="RefSeq" id="WP_000125019.1">
    <property type="nucleotide sequence ID" value="NC_007613.1"/>
</dbReference>
<dbReference type="SMR" id="Q31YU0"/>
<dbReference type="KEGG" id="sbo:SBO_2198"/>
<dbReference type="HOGENOM" id="CLU_079959_0_2_6"/>
<dbReference type="Proteomes" id="UP000007067">
    <property type="component" value="Chromosome"/>
</dbReference>
<dbReference type="GO" id="GO:0005829">
    <property type="term" value="C:cytosol"/>
    <property type="evidence" value="ECO:0007669"/>
    <property type="project" value="TreeGrafter"/>
</dbReference>
<dbReference type="GO" id="GO:0005524">
    <property type="term" value="F:ATP binding"/>
    <property type="evidence" value="ECO:0007669"/>
    <property type="project" value="UniProtKB-UniRule"/>
</dbReference>
<dbReference type="GO" id="GO:0036430">
    <property type="term" value="F:CMP kinase activity"/>
    <property type="evidence" value="ECO:0007669"/>
    <property type="project" value="RHEA"/>
</dbReference>
<dbReference type="GO" id="GO:0036431">
    <property type="term" value="F:dCMP kinase activity"/>
    <property type="evidence" value="ECO:0007669"/>
    <property type="project" value="RHEA"/>
</dbReference>
<dbReference type="GO" id="GO:0015949">
    <property type="term" value="P:nucleobase-containing small molecule interconversion"/>
    <property type="evidence" value="ECO:0007669"/>
    <property type="project" value="TreeGrafter"/>
</dbReference>
<dbReference type="GO" id="GO:0006220">
    <property type="term" value="P:pyrimidine nucleotide metabolic process"/>
    <property type="evidence" value="ECO:0007669"/>
    <property type="project" value="UniProtKB-UniRule"/>
</dbReference>
<dbReference type="CDD" id="cd02020">
    <property type="entry name" value="CMPK"/>
    <property type="match status" value="1"/>
</dbReference>
<dbReference type="FunFam" id="3.40.50.300:FF:000262">
    <property type="entry name" value="Cytidylate kinase"/>
    <property type="match status" value="1"/>
</dbReference>
<dbReference type="Gene3D" id="3.40.50.300">
    <property type="entry name" value="P-loop containing nucleotide triphosphate hydrolases"/>
    <property type="match status" value="1"/>
</dbReference>
<dbReference type="HAMAP" id="MF_00238">
    <property type="entry name" value="Cytidyl_kinase_type1"/>
    <property type="match status" value="1"/>
</dbReference>
<dbReference type="InterPro" id="IPR003136">
    <property type="entry name" value="Cytidylate_kin"/>
</dbReference>
<dbReference type="InterPro" id="IPR011994">
    <property type="entry name" value="Cytidylate_kinase_dom"/>
</dbReference>
<dbReference type="InterPro" id="IPR027417">
    <property type="entry name" value="P-loop_NTPase"/>
</dbReference>
<dbReference type="NCBIfam" id="TIGR00017">
    <property type="entry name" value="cmk"/>
    <property type="match status" value="1"/>
</dbReference>
<dbReference type="PANTHER" id="PTHR21299:SF2">
    <property type="entry name" value="CYTIDYLATE KINASE"/>
    <property type="match status" value="1"/>
</dbReference>
<dbReference type="PANTHER" id="PTHR21299">
    <property type="entry name" value="CYTIDYLATE KINASE/PANTOATE-BETA-ALANINE LIGASE"/>
    <property type="match status" value="1"/>
</dbReference>
<dbReference type="Pfam" id="PF02224">
    <property type="entry name" value="Cytidylate_kin"/>
    <property type="match status" value="1"/>
</dbReference>
<dbReference type="SUPFAM" id="SSF52540">
    <property type="entry name" value="P-loop containing nucleoside triphosphate hydrolases"/>
    <property type="match status" value="1"/>
</dbReference>
<evidence type="ECO:0000255" key="1">
    <source>
        <dbReference type="HAMAP-Rule" id="MF_00238"/>
    </source>
</evidence>
<name>KCY_SHIBS</name>
<keyword id="KW-0067">ATP-binding</keyword>
<keyword id="KW-0963">Cytoplasm</keyword>
<keyword id="KW-0418">Kinase</keyword>
<keyword id="KW-0547">Nucleotide-binding</keyword>
<keyword id="KW-0808">Transferase</keyword>
<gene>
    <name evidence="1" type="primary">cmk</name>
    <name type="ordered locus">SBO_2198</name>
</gene>
<accession>Q31YU0</accession>
<protein>
    <recommendedName>
        <fullName evidence="1">Cytidylate kinase</fullName>
        <shortName evidence="1">CK</shortName>
        <ecNumber evidence="1">2.7.4.25</ecNumber>
    </recommendedName>
    <alternativeName>
        <fullName evidence="1">Cytidine monophosphate kinase</fullName>
        <shortName evidence="1">CMP kinase</shortName>
    </alternativeName>
</protein>
<proteinExistence type="inferred from homology"/>
<reference key="1">
    <citation type="journal article" date="2005" name="Nucleic Acids Res.">
        <title>Genome dynamics and diversity of Shigella species, the etiologic agents of bacillary dysentery.</title>
        <authorList>
            <person name="Yang F."/>
            <person name="Yang J."/>
            <person name="Zhang X."/>
            <person name="Chen L."/>
            <person name="Jiang Y."/>
            <person name="Yan Y."/>
            <person name="Tang X."/>
            <person name="Wang J."/>
            <person name="Xiong Z."/>
            <person name="Dong J."/>
            <person name="Xue Y."/>
            <person name="Zhu Y."/>
            <person name="Xu X."/>
            <person name="Sun L."/>
            <person name="Chen S."/>
            <person name="Nie H."/>
            <person name="Peng J."/>
            <person name="Xu J."/>
            <person name="Wang Y."/>
            <person name="Yuan Z."/>
            <person name="Wen Y."/>
            <person name="Yao Z."/>
            <person name="Shen Y."/>
            <person name="Qiang B."/>
            <person name="Hou Y."/>
            <person name="Yu J."/>
            <person name="Jin Q."/>
        </authorList>
    </citation>
    <scope>NUCLEOTIDE SEQUENCE [LARGE SCALE GENOMIC DNA]</scope>
    <source>
        <strain>Sb227</strain>
    </source>
</reference>